<dbReference type="EMBL" id="CP000253">
    <property type="protein sequence ID" value="ABD30011.1"/>
    <property type="molecule type" value="Genomic_DNA"/>
</dbReference>
<dbReference type="RefSeq" id="WP_000573077.1">
    <property type="nucleotide sequence ID" value="NZ_LS483365.1"/>
</dbReference>
<dbReference type="RefSeq" id="YP_499439.1">
    <property type="nucleotide sequence ID" value="NC_007795.1"/>
</dbReference>
<dbReference type="SMR" id="Q2G2H7"/>
<dbReference type="STRING" id="93061.SAOUHSC_00886"/>
<dbReference type="PaxDb" id="1280-SAXN108_0944"/>
<dbReference type="GeneID" id="3919233"/>
<dbReference type="KEGG" id="sao:SAOUHSC_00886"/>
<dbReference type="PATRIC" id="fig|93061.5.peg.806"/>
<dbReference type="eggNOG" id="COG0651">
    <property type="taxonomic scope" value="Bacteria"/>
</dbReference>
<dbReference type="HOGENOM" id="CLU_007100_9_2_9"/>
<dbReference type="OrthoDB" id="9811718at2"/>
<dbReference type="PRO" id="PR:Q2G2H7"/>
<dbReference type="Proteomes" id="UP000008816">
    <property type="component" value="Chromosome"/>
</dbReference>
<dbReference type="GO" id="GO:0005886">
    <property type="term" value="C:plasma membrane"/>
    <property type="evidence" value="ECO:0007669"/>
    <property type="project" value="UniProtKB-SubCell"/>
</dbReference>
<dbReference type="GO" id="GO:0008137">
    <property type="term" value="F:NADH dehydrogenase (ubiquinone) activity"/>
    <property type="evidence" value="ECO:0007669"/>
    <property type="project" value="InterPro"/>
</dbReference>
<dbReference type="GO" id="GO:0015386">
    <property type="term" value="F:potassium:proton antiporter activity"/>
    <property type="evidence" value="ECO:0007669"/>
    <property type="project" value="InterPro"/>
</dbReference>
<dbReference type="GO" id="GO:0042773">
    <property type="term" value="P:ATP synthesis coupled electron transport"/>
    <property type="evidence" value="ECO:0007669"/>
    <property type="project" value="InterPro"/>
</dbReference>
<dbReference type="GO" id="GO:0006814">
    <property type="term" value="P:sodium ion transport"/>
    <property type="evidence" value="ECO:0007669"/>
    <property type="project" value="UniProtKB-KW"/>
</dbReference>
<dbReference type="InterPro" id="IPR050586">
    <property type="entry name" value="CPA3_Na-H_Antiporter_D"/>
</dbReference>
<dbReference type="InterPro" id="IPR004775">
    <property type="entry name" value="MnhD1"/>
</dbReference>
<dbReference type="InterPro" id="IPR003918">
    <property type="entry name" value="NADH_UbQ_OxRdtase"/>
</dbReference>
<dbReference type="InterPro" id="IPR001750">
    <property type="entry name" value="ND/Mrp_TM"/>
</dbReference>
<dbReference type="NCBIfam" id="TIGR00944">
    <property type="entry name" value="2a6301s04"/>
    <property type="match status" value="1"/>
</dbReference>
<dbReference type="NCBIfam" id="NF005818">
    <property type="entry name" value="PRK07691.1"/>
    <property type="match status" value="1"/>
</dbReference>
<dbReference type="PANTHER" id="PTHR42703:SF1">
    <property type="entry name" value="NA(+)_H(+) ANTIPORTER SUBUNIT D1"/>
    <property type="match status" value="1"/>
</dbReference>
<dbReference type="PANTHER" id="PTHR42703">
    <property type="entry name" value="NADH DEHYDROGENASE"/>
    <property type="match status" value="1"/>
</dbReference>
<dbReference type="Pfam" id="PF00361">
    <property type="entry name" value="Proton_antipo_M"/>
    <property type="match status" value="1"/>
</dbReference>
<dbReference type="PRINTS" id="PR01437">
    <property type="entry name" value="NUOXDRDTASE4"/>
</dbReference>
<reference key="1">
    <citation type="book" date="2006" name="Gram positive pathogens, 2nd edition">
        <title>The Staphylococcus aureus NCTC 8325 genome.</title>
        <editorList>
            <person name="Fischetti V."/>
            <person name="Novick R."/>
            <person name="Ferretti J."/>
            <person name="Portnoy D."/>
            <person name="Rood J."/>
        </editorList>
        <authorList>
            <person name="Gillaspy A.F."/>
            <person name="Worrell V."/>
            <person name="Orvis J."/>
            <person name="Roe B.A."/>
            <person name="Dyer D.W."/>
            <person name="Iandolo J.J."/>
        </authorList>
    </citation>
    <scope>NUCLEOTIDE SEQUENCE [LARGE SCALE GENOMIC DNA]</scope>
    <source>
        <strain>NCTC 8325 / PS 47</strain>
    </source>
</reference>
<gene>
    <name type="primary">mnhD1</name>
    <name type="ordered locus">SAOUHSC_00886</name>
</gene>
<accession>Q2G2H7</accession>
<organism>
    <name type="scientific">Staphylococcus aureus (strain NCTC 8325 / PS 47)</name>
    <dbReference type="NCBI Taxonomy" id="93061"/>
    <lineage>
        <taxon>Bacteria</taxon>
        <taxon>Bacillati</taxon>
        <taxon>Bacillota</taxon>
        <taxon>Bacilli</taxon>
        <taxon>Bacillales</taxon>
        <taxon>Staphylococcaceae</taxon>
        <taxon>Staphylococcus</taxon>
    </lineage>
</organism>
<keyword id="KW-0050">Antiport</keyword>
<keyword id="KW-1003">Cell membrane</keyword>
<keyword id="KW-0375">Hydrogen ion transport</keyword>
<keyword id="KW-0406">Ion transport</keyword>
<keyword id="KW-0472">Membrane</keyword>
<keyword id="KW-1185">Reference proteome</keyword>
<keyword id="KW-0915">Sodium</keyword>
<keyword id="KW-0739">Sodium transport</keyword>
<keyword id="KW-0812">Transmembrane</keyword>
<keyword id="KW-1133">Transmembrane helix</keyword>
<keyword id="KW-0813">Transport</keyword>
<proteinExistence type="inferred from homology"/>
<evidence type="ECO:0000250" key="1"/>
<evidence type="ECO:0000255" key="2"/>
<evidence type="ECO:0000305" key="3"/>
<sequence length="498" mass="54756">MIESNMLVLTLVIPVITAILLVFIGKRPIIKRYVALGGTLLTLVAAIINLANVVKHGPIRVELGSWKAPYSIVFVLDIFSALLIITSIIITAIVILYSYQTIGIERERYYYYFSVLFMLIGIIGAFTTGDIFNLFVFFEVFLMSSYFLLVIGSTKIQLQETIKYVLVNVVSSSFFVMGVAILYSVVGTLNLADISNKLANLSAHDSGLVNIVFILFIFVFATKAGVFPMFVWLPSAYYAPPIPIIAFFGALLTKVGVYAIARTLSLFFSDNVSFSHYVILFLALLTIIFGCVGAVAYANIKKIILYNVMIAVGVILVGVAMMTESGMIGAIYYTLHDMLVKLALFLLIGIMIKITGTADLRQFGGLIKRYPVLGWSFFIAALSLAGIPPLSGFYGKFFIVQSTFERGFYLSGVIVLLSSLVVLYSVIRIFLQGFFGQPKGYDLNNKVDVKYLTTIAIVAVVITVLYGLSADYLYPMVKAGAETFYNPSTYVKAVLGGK</sequence>
<comment type="function">
    <text evidence="1">Mnh complex is a Na(+)/H(+) antiporter involved in Na(+) excretion.</text>
</comment>
<comment type="subunit">
    <text evidence="1">May form a heterooligomeric complex that consists of seven subunits: mnhA1, mnhB1, mnhC1, mnhD1, mnhE1, mnhF1 and mnhG1.</text>
</comment>
<comment type="subcellular location">
    <subcellularLocation>
        <location evidence="3">Cell membrane</location>
        <topology evidence="3">Multi-pass membrane protein</topology>
    </subcellularLocation>
</comment>
<comment type="similarity">
    <text evidence="3">Belongs to the CPA3 antiporters (TC 2.A.63) subunit D family.</text>
</comment>
<feature type="chain" id="PRO_0000372133" description="Na(+)/H(+) antiporter subunit D1">
    <location>
        <begin position="1"/>
        <end position="498"/>
    </location>
</feature>
<feature type="transmembrane region" description="Helical" evidence="2">
    <location>
        <begin position="5"/>
        <end position="25"/>
    </location>
</feature>
<feature type="transmembrane region" description="Helical" evidence="2">
    <location>
        <begin position="34"/>
        <end position="54"/>
    </location>
</feature>
<feature type="transmembrane region" description="Helical" evidence="2">
    <location>
        <begin position="75"/>
        <end position="95"/>
    </location>
</feature>
<feature type="transmembrane region" description="Helical" evidence="2">
    <location>
        <begin position="109"/>
        <end position="129"/>
    </location>
</feature>
<feature type="transmembrane region" description="Helical" evidence="2">
    <location>
        <begin position="131"/>
        <end position="151"/>
    </location>
</feature>
<feature type="transmembrane region" description="Helical" evidence="2">
    <location>
        <begin position="169"/>
        <end position="189"/>
    </location>
</feature>
<feature type="transmembrane region" description="Helical" evidence="2">
    <location>
        <begin position="211"/>
        <end position="231"/>
    </location>
</feature>
<feature type="transmembrane region" description="Helical" evidence="2">
    <location>
        <begin position="241"/>
        <end position="261"/>
    </location>
</feature>
<feature type="transmembrane region" description="Helical" evidence="2">
    <location>
        <begin position="278"/>
        <end position="298"/>
    </location>
</feature>
<feature type="transmembrane region" description="Helical" evidence="2">
    <location>
        <begin position="303"/>
        <end position="323"/>
    </location>
</feature>
<feature type="transmembrane region" description="Helical" evidence="2">
    <location>
        <begin position="338"/>
        <end position="358"/>
    </location>
</feature>
<feature type="transmembrane region" description="Helical" evidence="2">
    <location>
        <begin position="373"/>
        <end position="393"/>
    </location>
</feature>
<feature type="transmembrane region" description="Helical" evidence="2">
    <location>
        <begin position="407"/>
        <end position="427"/>
    </location>
</feature>
<feature type="transmembrane region" description="Helical" evidence="2">
    <location>
        <begin position="455"/>
        <end position="475"/>
    </location>
</feature>
<protein>
    <recommendedName>
        <fullName>Na(+)/H(+) antiporter subunit D1</fullName>
    </recommendedName>
    <alternativeName>
        <fullName>Mnh complex subunit D1</fullName>
    </alternativeName>
</protein>
<name>MNHD1_STAA8</name>